<protein>
    <recommendedName>
        <fullName evidence="4">V-type proton ATPase 16 kDa proteolipid subunit c</fullName>
        <shortName evidence="4">V-ATPase 16 kDa proteolipid subunit c</shortName>
    </recommendedName>
    <alternativeName>
        <fullName evidence="4">Vacuolar proton pump 16 kDa proteolipid subunit c</fullName>
    </alternativeName>
</protein>
<accession>Q17046</accession>
<feature type="chain" id="PRO_0000071753" description="V-type proton ATPase 16 kDa proteolipid subunit c">
    <location>
        <begin position="1"/>
        <end position="161"/>
    </location>
</feature>
<feature type="topological domain" description="Lumenal" evidence="3">
    <location>
        <begin position="1"/>
        <end position="15"/>
    </location>
</feature>
<feature type="transmembrane region" description="Helical" evidence="3">
    <location>
        <begin position="16"/>
        <end position="36"/>
    </location>
</feature>
<feature type="topological domain" description="Cytoplasmic" evidence="3">
    <location>
        <begin position="37"/>
        <end position="58"/>
    </location>
</feature>
<feature type="transmembrane region" description="Helical" evidence="3">
    <location>
        <begin position="59"/>
        <end position="79"/>
    </location>
</feature>
<feature type="topological domain" description="Lumenal" evidence="3">
    <location>
        <begin position="80"/>
        <end position="98"/>
    </location>
</feature>
<feature type="transmembrane region" description="Helical" evidence="3">
    <location>
        <begin position="99"/>
        <end position="119"/>
    </location>
</feature>
<feature type="topological domain" description="Cytoplasmic" evidence="3">
    <location>
        <begin position="120"/>
        <end position="137"/>
    </location>
</feature>
<feature type="transmembrane region" description="Helical" evidence="3">
    <location>
        <begin position="138"/>
        <end position="158"/>
    </location>
</feature>
<feature type="topological domain" description="Lumenal" evidence="3">
    <location>
        <begin position="159"/>
        <end position="161"/>
    </location>
</feature>
<feature type="site" description="Essential for proton translocation" evidence="2">
    <location>
        <position position="145"/>
    </location>
</feature>
<organism>
    <name type="scientific">Ascaris suum</name>
    <name type="common">Pig roundworm</name>
    <name type="synonym">Ascaris lumbricoides</name>
    <dbReference type="NCBI Taxonomy" id="6253"/>
    <lineage>
        <taxon>Eukaryota</taxon>
        <taxon>Metazoa</taxon>
        <taxon>Ecdysozoa</taxon>
        <taxon>Nematoda</taxon>
        <taxon>Chromadorea</taxon>
        <taxon>Rhabditida</taxon>
        <taxon>Spirurina</taxon>
        <taxon>Ascaridomorpha</taxon>
        <taxon>Ascaridoidea</taxon>
        <taxon>Ascarididae</taxon>
        <taxon>Ascaris</taxon>
    </lineage>
</organism>
<evidence type="ECO:0000250" key="1">
    <source>
        <dbReference type="UniProtKB" id="P23956"/>
    </source>
</evidence>
<evidence type="ECO:0000250" key="2">
    <source>
        <dbReference type="UniProtKB" id="P63081"/>
    </source>
</evidence>
<evidence type="ECO:0000255" key="3"/>
<evidence type="ECO:0000305" key="4"/>
<reference key="1">
    <citation type="submission" date="1990-06" db="EMBL/GenBank/DDBJ databases">
        <authorList>
            <person name="Denker J.A."/>
            <person name="Nilsen T.W."/>
        </authorList>
    </citation>
    <scope>NUCLEOTIDE SEQUENCE [GENOMIC DNA]</scope>
</reference>
<sequence>MSYDLATAERAAYAPFFGYMGAASAQIFTVLGAAYGTAKSAVGISSMGVMRPELIMKSVIPVIMAGIIGIYGLVVAMVLRGKVTSASAGYTLDKGFAHLAAGLTCGLCGLGAGYAIGIVGDAGVRGTAQQPRLFVGMILILIFSEVLGLYGMIVALILGTS</sequence>
<dbReference type="EMBL" id="M33757">
    <property type="protein sequence ID" value="AAA29372.1"/>
    <property type="molecule type" value="Genomic_DNA"/>
</dbReference>
<dbReference type="SMR" id="Q17046"/>
<dbReference type="EnsemblMetazoa" id="AgB02_g132_t02">
    <property type="protein sequence ID" value="AgB02_g132_t02"/>
    <property type="gene ID" value="AgB02_g132"/>
</dbReference>
<dbReference type="EnsemblMetazoa" id="AgB02_g132_t03">
    <property type="protein sequence ID" value="AgB02_g132_t03"/>
    <property type="gene ID" value="AgB02_g132"/>
</dbReference>
<dbReference type="EnsemblMetazoa" id="AgB02_g132_t04">
    <property type="protein sequence ID" value="AgB02_g132_t04"/>
    <property type="gene ID" value="AgB02_g132"/>
</dbReference>
<dbReference type="GO" id="GO:0033179">
    <property type="term" value="C:proton-transporting V-type ATPase, V0 domain"/>
    <property type="evidence" value="ECO:0007669"/>
    <property type="project" value="InterPro"/>
</dbReference>
<dbReference type="GO" id="GO:0046961">
    <property type="term" value="F:proton-transporting ATPase activity, rotational mechanism"/>
    <property type="evidence" value="ECO:0007669"/>
    <property type="project" value="InterPro"/>
</dbReference>
<dbReference type="CDD" id="cd18175">
    <property type="entry name" value="ATP-synt_Vo_c_ATP6C_rpt1"/>
    <property type="match status" value="1"/>
</dbReference>
<dbReference type="CDD" id="cd18176">
    <property type="entry name" value="ATP-synt_Vo_c_ATP6C_rpt2"/>
    <property type="match status" value="1"/>
</dbReference>
<dbReference type="FunFam" id="1.20.120.610:FF:000001">
    <property type="entry name" value="V-type proton ATPase proteolipid subunit"/>
    <property type="match status" value="1"/>
</dbReference>
<dbReference type="Gene3D" id="1.20.120.610">
    <property type="entry name" value="lithium bound rotor ring of v- atpase"/>
    <property type="match status" value="1"/>
</dbReference>
<dbReference type="InterPro" id="IPR002379">
    <property type="entry name" value="ATPase_proteolipid_c-like_dom"/>
</dbReference>
<dbReference type="InterPro" id="IPR000245">
    <property type="entry name" value="ATPase_proteolipid_csu"/>
</dbReference>
<dbReference type="InterPro" id="IPR011555">
    <property type="entry name" value="ATPase_proteolipid_su_C_euk"/>
</dbReference>
<dbReference type="InterPro" id="IPR035921">
    <property type="entry name" value="F/V-ATP_Csub_sf"/>
</dbReference>
<dbReference type="NCBIfam" id="TIGR01100">
    <property type="entry name" value="V_ATP_synt_C"/>
    <property type="match status" value="1"/>
</dbReference>
<dbReference type="PANTHER" id="PTHR10263">
    <property type="entry name" value="V-TYPE PROTON ATPASE PROTEOLIPID SUBUNIT"/>
    <property type="match status" value="1"/>
</dbReference>
<dbReference type="Pfam" id="PF00137">
    <property type="entry name" value="ATP-synt_C"/>
    <property type="match status" value="2"/>
</dbReference>
<dbReference type="PRINTS" id="PR00122">
    <property type="entry name" value="VACATPASE"/>
</dbReference>
<dbReference type="SUPFAM" id="SSF81333">
    <property type="entry name" value="F1F0 ATP synthase subunit C"/>
    <property type="match status" value="1"/>
</dbReference>
<proteinExistence type="inferred from homology"/>
<comment type="function">
    <text evidence="1">Proton-conducting pore forming subunit of the V0 complex of vacuolar(H+)-ATPase (V-ATPase), a multisubunit enzyme composed of a peripheral complex (V1) that hydrolyzes ATP and a membrane integral complex (V0) that translocates protons (By similarity). V-ATPase is responsible for acidifying and maintaining the pH of intracellular compartments and in some cell types, is targeted to the plasma membrane, where it is responsible for acidifying the extracellular environment (By similarity).</text>
</comment>
<comment type="subunit">
    <text evidence="1">V-ATPase is a heteromultimeric enzyme made up of two complexes: the ATP-hydrolytic V1 complex and the proton translocation V0 complex (By similarity). The V1 complex consists of three catalytic AB heterodimers that form a heterohexamer, three peripheral stalks each consisting of EG heterodimers, one central rotor including subunits D and F, and the regulatory subunits C and H (By similarity). The proton translocation complex V0 consists of the proton transport subunit a, a ring of proteolipid subunits c9c'', rotary subunit d, subunits e and f, and the accessory subunits vah-19/Ac45 and vah-20/PRR (By similarity).</text>
</comment>
<comment type="subcellular location">
    <subcellularLocation>
        <location evidence="3">Membrane</location>
        <topology evidence="3">Multi-pass membrane protein</topology>
    </subcellularLocation>
</comment>
<comment type="similarity">
    <text evidence="4">Belongs to the V-ATPase proteolipid subunit family.</text>
</comment>
<gene>
    <name type="primary">12</name>
</gene>
<name>VATL_ASCSU</name>
<keyword id="KW-0375">Hydrogen ion transport</keyword>
<keyword id="KW-0406">Ion transport</keyword>
<keyword id="KW-0472">Membrane</keyword>
<keyword id="KW-0812">Transmembrane</keyword>
<keyword id="KW-1133">Transmembrane helix</keyword>
<keyword id="KW-0813">Transport</keyword>